<gene>
    <name type="primary">Rm62</name>
    <name type="synonym">Dmp68</name>
    <name type="synonym">p62</name>
    <name type="ORF">CG10279</name>
</gene>
<dbReference type="EC" id="3.6.4.13"/>
<dbReference type="EMBL" id="X52846">
    <property type="protein sequence ID" value="CAA37037.1"/>
    <property type="molecule type" value="mRNA"/>
</dbReference>
<dbReference type="EMBL" id="AE014297">
    <property type="protein sequence ID" value="AAF51926.2"/>
    <property type="molecule type" value="Genomic_DNA"/>
</dbReference>
<dbReference type="EMBL" id="AE014297">
    <property type="protein sequence ID" value="AAF51927.2"/>
    <property type="molecule type" value="Genomic_DNA"/>
</dbReference>
<dbReference type="EMBL" id="AE014297">
    <property type="protein sequence ID" value="AAG22212.1"/>
    <property type="molecule type" value="Genomic_DNA"/>
</dbReference>
<dbReference type="EMBL" id="AE014297">
    <property type="protein sequence ID" value="AAG22213.2"/>
    <property type="molecule type" value="Genomic_DNA"/>
</dbReference>
<dbReference type="EMBL" id="AE014297">
    <property type="protein sequence ID" value="AAN14331.1"/>
    <property type="molecule type" value="Genomic_DNA"/>
</dbReference>
<dbReference type="EMBL" id="AE014297">
    <property type="protein sequence ID" value="AAN14332.1"/>
    <property type="molecule type" value="Genomic_DNA"/>
</dbReference>
<dbReference type="EMBL" id="BT001716">
    <property type="protein sequence ID" value="AAN71471.1"/>
    <property type="molecule type" value="mRNA"/>
</dbReference>
<dbReference type="EMBL" id="BT011476">
    <property type="protein sequence ID" value="AAR99134.1"/>
    <property type="molecule type" value="mRNA"/>
</dbReference>
<dbReference type="EMBL" id="BT015209">
    <property type="protein sequence ID" value="AAT94438.1"/>
    <property type="molecule type" value="mRNA"/>
</dbReference>
<dbReference type="PIR" id="S11485">
    <property type="entry name" value="S11485"/>
</dbReference>
<dbReference type="RefSeq" id="NP_001163528.1">
    <molecule id="P19109-3"/>
    <property type="nucleotide sequence ID" value="NM_001170057.1"/>
</dbReference>
<dbReference type="RefSeq" id="NP_001189182.1">
    <molecule id="P19109-4"/>
    <property type="nucleotide sequence ID" value="NM_001202253.2"/>
</dbReference>
<dbReference type="RefSeq" id="NP_524243.2">
    <molecule id="P19109-1"/>
    <property type="nucleotide sequence ID" value="NM_079519.2"/>
</dbReference>
<dbReference type="RefSeq" id="NP_731031.1">
    <molecule id="P19109-3"/>
    <property type="nucleotide sequence ID" value="NM_169118.1"/>
</dbReference>
<dbReference type="RefSeq" id="NP_731032.1">
    <molecule id="P19109-4"/>
    <property type="nucleotide sequence ID" value="NM_169119.3"/>
</dbReference>
<dbReference type="RefSeq" id="NP_731033.1">
    <molecule id="P19109-2"/>
    <property type="nucleotide sequence ID" value="NM_169120.1"/>
</dbReference>
<dbReference type="RefSeq" id="NP_731034.1">
    <molecule id="P19109-2"/>
    <property type="nucleotide sequence ID" value="NM_169121.2"/>
</dbReference>
<dbReference type="RefSeq" id="NP_731035.2">
    <molecule id="P19109-2"/>
    <property type="nucleotide sequence ID" value="NM_169122.1"/>
</dbReference>
<dbReference type="SMR" id="P19109"/>
<dbReference type="BioGRID" id="65943">
    <property type="interactions" value="47"/>
</dbReference>
<dbReference type="DIP" id="DIP-17867N"/>
<dbReference type="FunCoup" id="P19109">
    <property type="interactions" value="1138"/>
</dbReference>
<dbReference type="IntAct" id="P19109">
    <property type="interactions" value="36"/>
</dbReference>
<dbReference type="MINT" id="P19109"/>
<dbReference type="STRING" id="7227.FBpp0078301"/>
<dbReference type="PaxDb" id="7227-FBpp0078301"/>
<dbReference type="DNASU" id="40739"/>
<dbReference type="EnsemblMetazoa" id="FBtr0078649">
    <molecule id="P19109-2"/>
    <property type="protein sequence ID" value="FBpp0078298"/>
    <property type="gene ID" value="FBgn0003261"/>
</dbReference>
<dbReference type="EnsemblMetazoa" id="FBtr0078650">
    <molecule id="P19109-3"/>
    <property type="protein sequence ID" value="FBpp0078299"/>
    <property type="gene ID" value="FBgn0003261"/>
</dbReference>
<dbReference type="EnsemblMetazoa" id="FBtr0078651">
    <molecule id="P19109-2"/>
    <property type="protein sequence ID" value="FBpp0078300"/>
    <property type="gene ID" value="FBgn0003261"/>
</dbReference>
<dbReference type="EnsemblMetazoa" id="FBtr0078652">
    <molecule id="P19109-1"/>
    <property type="protein sequence ID" value="FBpp0078301"/>
    <property type="gene ID" value="FBgn0003261"/>
</dbReference>
<dbReference type="EnsemblMetazoa" id="FBtr0078653">
    <molecule id="P19109-4"/>
    <property type="protein sequence ID" value="FBpp0078302"/>
    <property type="gene ID" value="FBgn0003261"/>
</dbReference>
<dbReference type="EnsemblMetazoa" id="FBtr0078654">
    <molecule id="P19109-2"/>
    <property type="protein sequence ID" value="FBpp0078303"/>
    <property type="gene ID" value="FBgn0003261"/>
</dbReference>
<dbReference type="EnsemblMetazoa" id="FBtr0301947">
    <molecule id="P19109-3"/>
    <property type="protein sequence ID" value="FBpp0291159"/>
    <property type="gene ID" value="FBgn0003261"/>
</dbReference>
<dbReference type="EnsemblMetazoa" id="FBtr0302597">
    <molecule id="P19109-4"/>
    <property type="protein sequence ID" value="FBpp0291753"/>
    <property type="gene ID" value="FBgn0003261"/>
</dbReference>
<dbReference type="GeneID" id="40739"/>
<dbReference type="KEGG" id="dme:Dmel_CG10279"/>
<dbReference type="UCSC" id="CG10279-RC">
    <property type="organism name" value="d. melanogaster"/>
</dbReference>
<dbReference type="AGR" id="FB:FBgn0003261"/>
<dbReference type="CTD" id="40739"/>
<dbReference type="FlyBase" id="FBgn0003261">
    <property type="gene designation" value="Rm62"/>
</dbReference>
<dbReference type="VEuPathDB" id="VectorBase:FBgn0003261"/>
<dbReference type="eggNOG" id="KOG0331">
    <property type="taxonomic scope" value="Eukaryota"/>
</dbReference>
<dbReference type="GeneTree" id="ENSGT00940000170749"/>
<dbReference type="HOGENOM" id="CLU_003041_16_7_1"/>
<dbReference type="InParanoid" id="P19109"/>
<dbReference type="OMA" id="NGAAMMH"/>
<dbReference type="OrthoDB" id="196131at2759"/>
<dbReference type="PhylomeDB" id="P19109"/>
<dbReference type="BRENDA" id="3.6.4.13">
    <property type="organism ID" value="1994"/>
</dbReference>
<dbReference type="SignaLink" id="P19109"/>
<dbReference type="BioGRID-ORCS" id="40739">
    <property type="hits" value="1 hit in 3 CRISPR screens"/>
</dbReference>
<dbReference type="ChiTaRS" id="Rm62">
    <property type="organism name" value="fly"/>
</dbReference>
<dbReference type="GenomeRNAi" id="40739"/>
<dbReference type="PRO" id="PR:P19109"/>
<dbReference type="Proteomes" id="UP000000803">
    <property type="component" value="Chromosome 3R"/>
</dbReference>
<dbReference type="Bgee" id="FBgn0003261">
    <property type="expression patterns" value="Expressed in enteroblast (Drosophila) in digestive tract and 293 other cell types or tissues"/>
</dbReference>
<dbReference type="ExpressionAtlas" id="P19109">
    <property type="expression patterns" value="baseline and differential"/>
</dbReference>
<dbReference type="GO" id="GO:0071013">
    <property type="term" value="C:catalytic step 2 spliceosome"/>
    <property type="evidence" value="ECO:0007005"/>
    <property type="project" value="FlyBase"/>
</dbReference>
<dbReference type="GO" id="GO:0005737">
    <property type="term" value="C:cytoplasm"/>
    <property type="evidence" value="ECO:0007005"/>
    <property type="project" value="FlyBase"/>
</dbReference>
<dbReference type="GO" id="GO:0005829">
    <property type="term" value="C:cytosol"/>
    <property type="evidence" value="ECO:0007669"/>
    <property type="project" value="UniProtKB-SubCell"/>
</dbReference>
<dbReference type="GO" id="GO:0005730">
    <property type="term" value="C:nucleolus"/>
    <property type="evidence" value="ECO:0007669"/>
    <property type="project" value="UniProtKB-SubCell"/>
</dbReference>
<dbReference type="GO" id="GO:0005634">
    <property type="term" value="C:nucleus"/>
    <property type="evidence" value="ECO:0000314"/>
    <property type="project" value="FlyBase"/>
</dbReference>
<dbReference type="GO" id="GO:0005700">
    <property type="term" value="C:polytene chromosome"/>
    <property type="evidence" value="ECO:0000314"/>
    <property type="project" value="FlyBase"/>
</dbReference>
<dbReference type="GO" id="GO:0005703">
    <property type="term" value="C:polytene chromosome puff"/>
    <property type="evidence" value="ECO:0000314"/>
    <property type="project" value="FlyBase"/>
</dbReference>
<dbReference type="GO" id="GO:0071011">
    <property type="term" value="C:precatalytic spliceosome"/>
    <property type="evidence" value="ECO:0007005"/>
    <property type="project" value="FlyBase"/>
</dbReference>
<dbReference type="GO" id="GO:1990904">
    <property type="term" value="C:ribonucleoprotein complex"/>
    <property type="evidence" value="ECO:0000318"/>
    <property type="project" value="GO_Central"/>
</dbReference>
<dbReference type="GO" id="GO:0005524">
    <property type="term" value="F:ATP binding"/>
    <property type="evidence" value="ECO:0007669"/>
    <property type="project" value="UniProtKB-KW"/>
</dbReference>
<dbReference type="GO" id="GO:0016887">
    <property type="term" value="F:ATP hydrolysis activity"/>
    <property type="evidence" value="ECO:0007669"/>
    <property type="project" value="RHEA"/>
</dbReference>
<dbReference type="GO" id="GO:0003729">
    <property type="term" value="F:mRNA binding"/>
    <property type="evidence" value="ECO:0000250"/>
    <property type="project" value="FlyBase"/>
</dbReference>
<dbReference type="GO" id="GO:0003724">
    <property type="term" value="F:RNA helicase activity"/>
    <property type="evidence" value="ECO:0000318"/>
    <property type="project" value="GO_Central"/>
</dbReference>
<dbReference type="GO" id="GO:0000380">
    <property type="term" value="P:alternative mRNA splicing, via spliceosome"/>
    <property type="evidence" value="ECO:0000318"/>
    <property type="project" value="GO_Central"/>
</dbReference>
<dbReference type="GO" id="GO:0051607">
    <property type="term" value="P:defense response to virus"/>
    <property type="evidence" value="ECO:0007669"/>
    <property type="project" value="UniProtKB-KW"/>
</dbReference>
<dbReference type="GO" id="GO:0002376">
    <property type="term" value="P:immune system process"/>
    <property type="evidence" value="ECO:0007669"/>
    <property type="project" value="UniProtKB-KW"/>
</dbReference>
<dbReference type="GO" id="GO:0000398">
    <property type="term" value="P:mRNA splicing, via spliceosome"/>
    <property type="evidence" value="ECO:0000305"/>
    <property type="project" value="FlyBase"/>
</dbReference>
<dbReference type="GO" id="GO:0000381">
    <property type="term" value="P:regulation of alternative mRNA splicing, via spliceosome"/>
    <property type="evidence" value="ECO:0007001"/>
    <property type="project" value="FlyBase"/>
</dbReference>
<dbReference type="GO" id="GO:0050688">
    <property type="term" value="P:regulation of defense response to virus"/>
    <property type="evidence" value="ECO:0000315"/>
    <property type="project" value="FlyBase"/>
</dbReference>
<dbReference type="GO" id="GO:0006417">
    <property type="term" value="P:regulation of translation"/>
    <property type="evidence" value="ECO:0007669"/>
    <property type="project" value="UniProtKB-KW"/>
</dbReference>
<dbReference type="GO" id="GO:0035194">
    <property type="term" value="P:regulatory ncRNA-mediated post-transcriptional gene silencing"/>
    <property type="evidence" value="ECO:0000315"/>
    <property type="project" value="FlyBase"/>
</dbReference>
<dbReference type="GO" id="GO:0141194">
    <property type="term" value="P:siRNA-mediated heterochromatin formation"/>
    <property type="evidence" value="ECO:0000315"/>
    <property type="project" value="FlyBase"/>
</dbReference>
<dbReference type="CDD" id="cd17966">
    <property type="entry name" value="DEADc_DDX5_DDX17"/>
    <property type="match status" value="1"/>
</dbReference>
<dbReference type="CDD" id="cd18787">
    <property type="entry name" value="SF2_C_DEAD"/>
    <property type="match status" value="1"/>
</dbReference>
<dbReference type="FunFam" id="3.40.50.300:FF:000008">
    <property type="entry name" value="ATP-dependent RNA helicase RhlB"/>
    <property type="match status" value="1"/>
</dbReference>
<dbReference type="FunFam" id="3.40.50.300:FF:000079">
    <property type="entry name" value="probable ATP-dependent RNA helicase DDX17"/>
    <property type="match status" value="1"/>
</dbReference>
<dbReference type="Gene3D" id="3.40.50.300">
    <property type="entry name" value="P-loop containing nucleotide triphosphate hydrolases"/>
    <property type="match status" value="2"/>
</dbReference>
<dbReference type="InterPro" id="IPR011545">
    <property type="entry name" value="DEAD/DEAH_box_helicase_dom"/>
</dbReference>
<dbReference type="InterPro" id="IPR014001">
    <property type="entry name" value="Helicase_ATP-bd"/>
</dbReference>
<dbReference type="InterPro" id="IPR001650">
    <property type="entry name" value="Helicase_C-like"/>
</dbReference>
<dbReference type="InterPro" id="IPR027417">
    <property type="entry name" value="P-loop_NTPase"/>
</dbReference>
<dbReference type="InterPro" id="IPR000629">
    <property type="entry name" value="RNA-helicase_DEAD-box_CS"/>
</dbReference>
<dbReference type="InterPro" id="IPR014014">
    <property type="entry name" value="RNA_helicase_DEAD_Q_motif"/>
</dbReference>
<dbReference type="PANTHER" id="PTHR47958">
    <property type="entry name" value="ATP-DEPENDENT RNA HELICASE DBP3"/>
    <property type="match status" value="1"/>
</dbReference>
<dbReference type="Pfam" id="PF00270">
    <property type="entry name" value="DEAD"/>
    <property type="match status" value="1"/>
</dbReference>
<dbReference type="Pfam" id="PF00271">
    <property type="entry name" value="Helicase_C"/>
    <property type="match status" value="1"/>
</dbReference>
<dbReference type="SMART" id="SM00487">
    <property type="entry name" value="DEXDc"/>
    <property type="match status" value="1"/>
</dbReference>
<dbReference type="SMART" id="SM00490">
    <property type="entry name" value="HELICc"/>
    <property type="match status" value="1"/>
</dbReference>
<dbReference type="SUPFAM" id="SSF52540">
    <property type="entry name" value="P-loop containing nucleoside triphosphate hydrolases"/>
    <property type="match status" value="1"/>
</dbReference>
<dbReference type="PROSITE" id="PS00039">
    <property type="entry name" value="DEAD_ATP_HELICASE"/>
    <property type="match status" value="1"/>
</dbReference>
<dbReference type="PROSITE" id="PS51192">
    <property type="entry name" value="HELICASE_ATP_BIND_1"/>
    <property type="match status" value="1"/>
</dbReference>
<dbReference type="PROSITE" id="PS51194">
    <property type="entry name" value="HELICASE_CTER"/>
    <property type="match status" value="1"/>
</dbReference>
<dbReference type="PROSITE" id="PS51195">
    <property type="entry name" value="Q_MOTIF"/>
    <property type="match status" value="1"/>
</dbReference>
<evidence type="ECO:0000250" key="1">
    <source>
        <dbReference type="UniProtKB" id="Q92841"/>
    </source>
</evidence>
<evidence type="ECO:0000255" key="2">
    <source>
        <dbReference type="PROSITE-ProRule" id="PRU00541"/>
    </source>
</evidence>
<evidence type="ECO:0000255" key="3">
    <source>
        <dbReference type="PROSITE-ProRule" id="PRU00542"/>
    </source>
</evidence>
<evidence type="ECO:0000256" key="4">
    <source>
        <dbReference type="SAM" id="MobiDB-lite"/>
    </source>
</evidence>
<evidence type="ECO:0000269" key="5">
    <source>
    </source>
</evidence>
<evidence type="ECO:0000269" key="6">
    <source>
    </source>
</evidence>
<evidence type="ECO:0000303" key="7">
    <source>
    </source>
</evidence>
<evidence type="ECO:0000303" key="8">
    <source>
    </source>
</evidence>
<evidence type="ECO:0000303" key="9">
    <source ref="5"/>
</evidence>
<evidence type="ECO:0000305" key="10"/>
<comment type="function">
    <text evidence="1 5 6">As an RNA helicase, unwinds RNA and alters RNA structures through ATP binding and hydrolysis. Involved in multiple cellular processes, including pre-mRNA splicing, alternative splicing, rRNA processing and miRNA processing, as well as transcription regulation (By similarity) (PubMed:12368261). Plays a role in innate immunity. Specifically restricts bunyavirus infection, including Rift Valley fever virus (RVFV) or La Crosse virus (LACV), but not vesicular stomatitis virus (VSV), in an interferon- and DROSHA-independent manner (PubMed:25126784).</text>
</comment>
<comment type="catalytic activity">
    <reaction evidence="1">
        <text>ATP + H2O = ADP + phosphate + H(+)</text>
        <dbReference type="Rhea" id="RHEA:13065"/>
        <dbReference type="ChEBI" id="CHEBI:15377"/>
        <dbReference type="ChEBI" id="CHEBI:15378"/>
        <dbReference type="ChEBI" id="CHEBI:30616"/>
        <dbReference type="ChEBI" id="CHEBI:43474"/>
        <dbReference type="ChEBI" id="CHEBI:456216"/>
        <dbReference type="EC" id="3.6.4.13"/>
    </reaction>
</comment>
<comment type="subunit">
    <text evidence="5">Interacts with Fmr1 to form the RNA-induced silencing complex (RISC), a ribonucleoprotein (RNP) complex involved in translation regulation, other components of the complex are RpL5, RpL11, AGO2 and Dcr-1.</text>
</comment>
<comment type="interaction">
    <interactant intactId="EBI-200734">
        <id>P19109</id>
    </interactant>
    <interactant intactId="EBI-422631">
        <id>Q9NFU0</id>
        <label>Fmr1</label>
    </interactant>
    <organismsDiffer>false</organismsDiffer>
    <experiments>4</experiments>
</comment>
<comment type="subcellular location">
    <subcellularLocation>
        <location evidence="1">Nucleus</location>
    </subcellularLocation>
    <subcellularLocation>
        <location evidence="1">Nucleus</location>
        <location evidence="1">Nucleolus</location>
    </subcellularLocation>
    <subcellularLocation>
        <location evidence="1">Cytoplasm</location>
        <location evidence="1">Cytosol</location>
    </subcellularLocation>
    <text evidence="1">In the course of bunyavirus infection, relocalizes from the nucleus to the cytosol where it binds viral RNA to antagonize replication.</text>
</comment>
<comment type="alternative products">
    <event type="alternative splicing"/>
    <isoform>
        <id>P19109-1</id>
        <name>A</name>
        <sequence type="displayed"/>
    </isoform>
    <isoform>
        <id>P19109-2</id>
        <name>C</name>
        <name>B</name>
        <name>F</name>
        <sequence type="described" ref="VSP_007413 VSP_007415"/>
    </isoform>
    <isoform>
        <id>P19109-3</id>
        <name>D</name>
        <sequence type="described" ref="VSP_007414"/>
    </isoform>
    <isoform>
        <id>P19109-4</id>
        <name>E</name>
        <sequence type="described" ref="VSP_007413 VSP_007416"/>
    </isoform>
</comment>
<comment type="disruption phenotype">
    <text evidence="6">No phenotype under normal conditions. Upon infection with Rift Valley fever virus (RVFV) or La Crosse virus (LACV), knockdown flies exhibit increased mortality. No phenotype upon infection with other viruses, including vesicular stomatitis virus (VSV), Sindbis virus (SINV), nor Drosophila C virus (DCV).</text>
</comment>
<comment type="similarity">
    <text evidence="10">Belongs to the DEAD box helicase family. DDX5/DBP2 subfamily.</text>
</comment>
<organism>
    <name type="scientific">Drosophila melanogaster</name>
    <name type="common">Fruit fly</name>
    <dbReference type="NCBI Taxonomy" id="7227"/>
    <lineage>
        <taxon>Eukaryota</taxon>
        <taxon>Metazoa</taxon>
        <taxon>Ecdysozoa</taxon>
        <taxon>Arthropoda</taxon>
        <taxon>Hexapoda</taxon>
        <taxon>Insecta</taxon>
        <taxon>Pterygota</taxon>
        <taxon>Neoptera</taxon>
        <taxon>Endopterygota</taxon>
        <taxon>Diptera</taxon>
        <taxon>Brachycera</taxon>
        <taxon>Muscomorpha</taxon>
        <taxon>Ephydroidea</taxon>
        <taxon>Drosophilidae</taxon>
        <taxon>Drosophila</taxon>
        <taxon>Sophophora</taxon>
    </lineage>
</organism>
<name>DDX17_DROME</name>
<accession>P19109</accession>
<accession>A4V2H1</accession>
<accession>Q6AWN9</accession>
<accession>Q8IGL7</accession>
<accession>Q95TB8</accession>
<accession>Q9I7P5</accession>
<accession>Q9VNK4</accession>
<protein>
    <recommendedName>
        <fullName>ATP-dependent RNA helicase p62</fullName>
        <ecNumber>3.6.4.13</ecNumber>
    </recommendedName>
</protein>
<keyword id="KW-0025">Alternative splicing</keyword>
<keyword id="KW-0051">Antiviral defense</keyword>
<keyword id="KW-0067">ATP-binding</keyword>
<keyword id="KW-0963">Cytoplasm</keyword>
<keyword id="KW-0347">Helicase</keyword>
<keyword id="KW-0378">Hydrolase</keyword>
<keyword id="KW-0391">Immunity</keyword>
<keyword id="KW-0507">mRNA processing</keyword>
<keyword id="KW-0508">mRNA splicing</keyword>
<keyword id="KW-0547">Nucleotide-binding</keyword>
<keyword id="KW-0539">Nucleus</keyword>
<keyword id="KW-1185">Reference proteome</keyword>
<keyword id="KW-0694">RNA-binding</keyword>
<keyword id="KW-0943">RNA-mediated gene silencing</keyword>
<keyword id="KW-0810">Translation regulation</keyword>
<proteinExistence type="evidence at protein level"/>
<reference key="1">
    <citation type="journal article" date="1990" name="Nucleic Acids Res.">
        <title>A novel RNA helicase gene tightly linked to the Triplo-lethal locus of Drosophila.</title>
        <authorList>
            <person name="Dorer D.R."/>
            <person name="Christensen A.C."/>
            <person name="Johnson D.H."/>
        </authorList>
    </citation>
    <scope>NUCLEOTIDE SEQUENCE [MRNA] (ISOFORM D)</scope>
    <source>
        <tissue>Embryo</tissue>
    </source>
</reference>
<reference key="2">
    <citation type="journal article" date="2000" name="Science">
        <title>The genome sequence of Drosophila melanogaster.</title>
        <authorList>
            <person name="Adams M.D."/>
            <person name="Celniker S.E."/>
            <person name="Holt R.A."/>
            <person name="Evans C.A."/>
            <person name="Gocayne J.D."/>
            <person name="Amanatides P.G."/>
            <person name="Scherer S.E."/>
            <person name="Li P.W."/>
            <person name="Hoskins R.A."/>
            <person name="Galle R.F."/>
            <person name="George R.A."/>
            <person name="Lewis S.E."/>
            <person name="Richards S."/>
            <person name="Ashburner M."/>
            <person name="Henderson S.N."/>
            <person name="Sutton G.G."/>
            <person name="Wortman J.R."/>
            <person name="Yandell M.D."/>
            <person name="Zhang Q."/>
            <person name="Chen L.X."/>
            <person name="Brandon R.C."/>
            <person name="Rogers Y.-H.C."/>
            <person name="Blazej R.G."/>
            <person name="Champe M."/>
            <person name="Pfeiffer B.D."/>
            <person name="Wan K.H."/>
            <person name="Doyle C."/>
            <person name="Baxter E.G."/>
            <person name="Helt G."/>
            <person name="Nelson C.R."/>
            <person name="Miklos G.L.G."/>
            <person name="Abril J.F."/>
            <person name="Agbayani A."/>
            <person name="An H.-J."/>
            <person name="Andrews-Pfannkoch C."/>
            <person name="Baldwin D."/>
            <person name="Ballew R.M."/>
            <person name="Basu A."/>
            <person name="Baxendale J."/>
            <person name="Bayraktaroglu L."/>
            <person name="Beasley E.M."/>
            <person name="Beeson K.Y."/>
            <person name="Benos P.V."/>
            <person name="Berman B.P."/>
            <person name="Bhandari D."/>
            <person name="Bolshakov S."/>
            <person name="Borkova D."/>
            <person name="Botchan M.R."/>
            <person name="Bouck J."/>
            <person name="Brokstein P."/>
            <person name="Brottier P."/>
            <person name="Burtis K.C."/>
            <person name="Busam D.A."/>
            <person name="Butler H."/>
            <person name="Cadieu E."/>
            <person name="Center A."/>
            <person name="Chandra I."/>
            <person name="Cherry J.M."/>
            <person name="Cawley S."/>
            <person name="Dahlke C."/>
            <person name="Davenport L.B."/>
            <person name="Davies P."/>
            <person name="de Pablos B."/>
            <person name="Delcher A."/>
            <person name="Deng Z."/>
            <person name="Mays A.D."/>
            <person name="Dew I."/>
            <person name="Dietz S.M."/>
            <person name="Dodson K."/>
            <person name="Doup L.E."/>
            <person name="Downes M."/>
            <person name="Dugan-Rocha S."/>
            <person name="Dunkov B.C."/>
            <person name="Dunn P."/>
            <person name="Durbin K.J."/>
            <person name="Evangelista C.C."/>
            <person name="Ferraz C."/>
            <person name="Ferriera S."/>
            <person name="Fleischmann W."/>
            <person name="Fosler C."/>
            <person name="Gabrielian A.E."/>
            <person name="Garg N.S."/>
            <person name="Gelbart W.M."/>
            <person name="Glasser K."/>
            <person name="Glodek A."/>
            <person name="Gong F."/>
            <person name="Gorrell J.H."/>
            <person name="Gu Z."/>
            <person name="Guan P."/>
            <person name="Harris M."/>
            <person name="Harris N.L."/>
            <person name="Harvey D.A."/>
            <person name="Heiman T.J."/>
            <person name="Hernandez J.R."/>
            <person name="Houck J."/>
            <person name="Hostin D."/>
            <person name="Houston K.A."/>
            <person name="Howland T.J."/>
            <person name="Wei M.-H."/>
            <person name="Ibegwam C."/>
            <person name="Jalali M."/>
            <person name="Kalush F."/>
            <person name="Karpen G.H."/>
            <person name="Ke Z."/>
            <person name="Kennison J.A."/>
            <person name="Ketchum K.A."/>
            <person name="Kimmel B.E."/>
            <person name="Kodira C.D."/>
            <person name="Kraft C.L."/>
            <person name="Kravitz S."/>
            <person name="Kulp D."/>
            <person name="Lai Z."/>
            <person name="Lasko P."/>
            <person name="Lei Y."/>
            <person name="Levitsky A.A."/>
            <person name="Li J.H."/>
            <person name="Li Z."/>
            <person name="Liang Y."/>
            <person name="Lin X."/>
            <person name="Liu X."/>
            <person name="Mattei B."/>
            <person name="McIntosh T.C."/>
            <person name="McLeod M.P."/>
            <person name="McPherson D."/>
            <person name="Merkulov G."/>
            <person name="Milshina N.V."/>
            <person name="Mobarry C."/>
            <person name="Morris J."/>
            <person name="Moshrefi A."/>
            <person name="Mount S.M."/>
            <person name="Moy M."/>
            <person name="Murphy B."/>
            <person name="Murphy L."/>
            <person name="Muzny D.M."/>
            <person name="Nelson D.L."/>
            <person name="Nelson D.R."/>
            <person name="Nelson K.A."/>
            <person name="Nixon K."/>
            <person name="Nusskern D.R."/>
            <person name="Pacleb J.M."/>
            <person name="Palazzolo M."/>
            <person name="Pittman G.S."/>
            <person name="Pan S."/>
            <person name="Pollard J."/>
            <person name="Puri V."/>
            <person name="Reese M.G."/>
            <person name="Reinert K."/>
            <person name="Remington K."/>
            <person name="Saunders R.D.C."/>
            <person name="Scheeler F."/>
            <person name="Shen H."/>
            <person name="Shue B.C."/>
            <person name="Siden-Kiamos I."/>
            <person name="Simpson M."/>
            <person name="Skupski M.P."/>
            <person name="Smith T.J."/>
            <person name="Spier E."/>
            <person name="Spradling A.C."/>
            <person name="Stapleton M."/>
            <person name="Strong R."/>
            <person name="Sun E."/>
            <person name="Svirskas R."/>
            <person name="Tector C."/>
            <person name="Turner R."/>
            <person name="Venter E."/>
            <person name="Wang A.H."/>
            <person name="Wang X."/>
            <person name="Wang Z.-Y."/>
            <person name="Wassarman D.A."/>
            <person name="Weinstock G.M."/>
            <person name="Weissenbach J."/>
            <person name="Williams S.M."/>
            <person name="Woodage T."/>
            <person name="Worley K.C."/>
            <person name="Wu D."/>
            <person name="Yang S."/>
            <person name="Yao Q.A."/>
            <person name="Ye J."/>
            <person name="Yeh R.-F."/>
            <person name="Zaveri J.S."/>
            <person name="Zhan M."/>
            <person name="Zhang G."/>
            <person name="Zhao Q."/>
            <person name="Zheng L."/>
            <person name="Zheng X.H."/>
            <person name="Zhong F.N."/>
            <person name="Zhong W."/>
            <person name="Zhou X."/>
            <person name="Zhu S.C."/>
            <person name="Zhu X."/>
            <person name="Smith H.O."/>
            <person name="Gibbs R.A."/>
            <person name="Myers E.W."/>
            <person name="Rubin G.M."/>
            <person name="Venter J.C."/>
        </authorList>
    </citation>
    <scope>NUCLEOTIDE SEQUENCE [LARGE SCALE GENOMIC DNA]</scope>
    <source>
        <strain>Berkeley</strain>
    </source>
</reference>
<reference key="3">
    <citation type="journal article" date="2002" name="Genome Biol.">
        <title>Annotation of the Drosophila melanogaster euchromatic genome: a systematic review.</title>
        <authorList>
            <person name="Misra S."/>
            <person name="Crosby M.A."/>
            <person name="Mungall C.J."/>
            <person name="Matthews B.B."/>
            <person name="Campbell K.S."/>
            <person name="Hradecky P."/>
            <person name="Huang Y."/>
            <person name="Kaminker J.S."/>
            <person name="Millburn G.H."/>
            <person name="Prochnik S.E."/>
            <person name="Smith C.D."/>
            <person name="Tupy J.L."/>
            <person name="Whitfield E.J."/>
            <person name="Bayraktaroglu L."/>
            <person name="Berman B.P."/>
            <person name="Bettencourt B.R."/>
            <person name="Celniker S.E."/>
            <person name="de Grey A.D.N.J."/>
            <person name="Drysdale R.A."/>
            <person name="Harris N.L."/>
            <person name="Richter J."/>
            <person name="Russo S."/>
            <person name="Schroeder A.J."/>
            <person name="Shu S.Q."/>
            <person name="Stapleton M."/>
            <person name="Yamada C."/>
            <person name="Ashburner M."/>
            <person name="Gelbart W.M."/>
            <person name="Rubin G.M."/>
            <person name="Lewis S.E."/>
        </authorList>
    </citation>
    <scope>GENOME REANNOTATION</scope>
    <scope>ALTERNATIVE SPLICING</scope>
    <source>
        <strain>Berkeley</strain>
    </source>
</reference>
<reference key="4">
    <citation type="journal article" date="2002" name="Genome Biol.">
        <title>A Drosophila full-length cDNA resource.</title>
        <authorList>
            <person name="Stapleton M."/>
            <person name="Carlson J.W."/>
            <person name="Brokstein P."/>
            <person name="Yu C."/>
            <person name="Champe M."/>
            <person name="George R.A."/>
            <person name="Guarin H."/>
            <person name="Kronmiller B."/>
            <person name="Pacleb J.M."/>
            <person name="Park S."/>
            <person name="Wan K.H."/>
            <person name="Rubin G.M."/>
            <person name="Celniker S.E."/>
        </authorList>
    </citation>
    <scope>NUCLEOTIDE SEQUENCE [LARGE SCALE MRNA] (ISOFORM C)</scope>
    <source>
        <strain>Berkeley</strain>
        <tissue>Embryo</tissue>
    </source>
</reference>
<reference key="5">
    <citation type="submission" date="2004-08" db="EMBL/GenBank/DDBJ databases">
        <authorList>
            <person name="Stapleton M."/>
            <person name="Carlson J.W."/>
            <person name="Chavez C."/>
            <person name="Frise E."/>
            <person name="George R.A."/>
            <person name="Pacleb J.M."/>
            <person name="Park S."/>
            <person name="Wan K.H."/>
            <person name="Yu C."/>
            <person name="Rubin G.M."/>
            <person name="Celniker S.E."/>
        </authorList>
    </citation>
    <scope>NUCLEOTIDE SEQUENCE [LARGE SCALE MRNA] (ISOFORMS A AND D)</scope>
    <source>
        <strain>Berkeley</strain>
        <tissue>Embryo</tissue>
    </source>
</reference>
<reference key="6">
    <citation type="journal article" date="2002" name="Genes Dev.">
        <title>A Drosophila fragile X protein interacts with components of RNAi and ribosomal proteins.</title>
        <authorList>
            <person name="Ishizuka A."/>
            <person name="Siomi M.C."/>
            <person name="Siomi H."/>
        </authorList>
    </citation>
    <scope>FUNCTION</scope>
    <scope>INTERACTION WITH FMR1</scope>
</reference>
<reference key="7">
    <citation type="journal article" date="2014" name="Cell">
        <title>Stem-loop recognition by DDX17 facilitates miRNA processing and antiviral defense.</title>
        <authorList>
            <person name="Moy R.H."/>
            <person name="Cole B.S."/>
            <person name="Yasunaga A."/>
            <person name="Gold B."/>
            <person name="Shankarling G."/>
            <person name="Varble A."/>
            <person name="Molleston J.M."/>
            <person name="tenOever B.R."/>
            <person name="Lynch K.W."/>
            <person name="Cherry S."/>
        </authorList>
    </citation>
    <scope>FUNCTION IN ANTIVIRAL DEFENSE</scope>
    <scope>DISRUPTION PHENOTYPE</scope>
</reference>
<feature type="chain" id="PRO_0000055007" description="ATP-dependent RNA helicase p62">
    <location>
        <begin position="1"/>
        <end position="719"/>
    </location>
</feature>
<feature type="domain" description="Helicase ATP-binding" evidence="2">
    <location>
        <begin position="312"/>
        <end position="487"/>
    </location>
</feature>
<feature type="domain" description="Helicase C-terminal" evidence="3">
    <location>
        <begin position="519"/>
        <end position="664"/>
    </location>
</feature>
<feature type="region of interest" description="Disordered" evidence="4">
    <location>
        <begin position="94"/>
        <end position="234"/>
    </location>
</feature>
<feature type="region of interest" description="Disordered" evidence="4">
    <location>
        <begin position="689"/>
        <end position="719"/>
    </location>
</feature>
<feature type="short sequence motif" description="Q motif">
    <location>
        <begin position="281"/>
        <end position="309"/>
    </location>
</feature>
<feature type="short sequence motif" description="DEAD box">
    <location>
        <begin position="435"/>
        <end position="438"/>
    </location>
</feature>
<feature type="compositionally biased region" description="Basic and acidic residues" evidence="4">
    <location>
        <begin position="99"/>
        <end position="108"/>
    </location>
</feature>
<feature type="compositionally biased region" description="Basic and acidic residues" evidence="4">
    <location>
        <begin position="137"/>
        <end position="171"/>
    </location>
</feature>
<feature type="compositionally biased region" description="Gly residues" evidence="4">
    <location>
        <begin position="172"/>
        <end position="188"/>
    </location>
</feature>
<feature type="compositionally biased region" description="Basic and acidic residues" evidence="4">
    <location>
        <begin position="194"/>
        <end position="205"/>
    </location>
</feature>
<feature type="compositionally biased region" description="Gly residues" evidence="4">
    <location>
        <begin position="206"/>
        <end position="226"/>
    </location>
</feature>
<feature type="compositionally biased region" description="Gly residues" evidence="4">
    <location>
        <begin position="701"/>
        <end position="711"/>
    </location>
</feature>
<feature type="binding site" evidence="2">
    <location>
        <begin position="325"/>
        <end position="332"/>
    </location>
    <ligand>
        <name>ATP</name>
        <dbReference type="ChEBI" id="CHEBI:30616"/>
    </ligand>
</feature>
<feature type="splice variant" id="VSP_007414" description="In isoform D." evidence="8 9">
    <location>
        <begin position="1"/>
        <end position="144"/>
    </location>
</feature>
<feature type="splice variant" id="VSP_007413" description="In isoform C and isoform E." evidence="7">
    <location>
        <begin position="1"/>
        <end position="141"/>
    </location>
</feature>
<feature type="splice variant" id="VSP_007416" description="In isoform E." evidence="10">
    <original>EGVM</original>
    <variation>MRAK</variation>
    <location>
        <begin position="142"/>
        <end position="145"/>
    </location>
</feature>
<feature type="splice variant" id="VSP_007415" description="In isoform C." evidence="7">
    <original>EGV</original>
    <variation>MMM</variation>
    <location>
        <begin position="142"/>
        <end position="144"/>
    </location>
</feature>
<feature type="sequence conflict" description="In Ref. 1; CAA37037." evidence="10" ref="1">
    <original>R</original>
    <variation>A</variation>
    <location>
        <position position="195"/>
    </location>
</feature>
<feature type="sequence conflict" description="In Ref. 1; CAA37037." evidence="10" ref="1">
    <original>R</original>
    <variation>P</variation>
    <location>
        <position position="675"/>
    </location>
</feature>
<sequence length="719" mass="78548">MLKLVQYIAPRVGGATPRPTACGWGNLLLISPRSGASSEKCITQRRHFLFSSASSSGTFASSSSLCTEQRQQFHGSRRNRETILFPSTYSSLQAQSQRAFRDSSKPDSDDYVDSIPKAEQRTRTRKSLFNDPDERTEEIKIEGVMAPHDRDFGHSGRGGRGGDRGGDDRRGGGGGGNRFGGGGGGGDYHGIRNGRVEKRRDDRGGGNRFGGGGGFGDRRGGGGGGSQDLPMRPVDFSNLAPFKKNFYQEHPNVANRSPYEVQRYREEQEITVRGQVPNPIQDFSEVHLPDYVMKEIRRQGYKAPTAIQAQGWPIAMSGSNFVGIAKTGSGKTLGYILPAIVHINNQQPLQRGDGPIALVLAPTRELAQQIQQVATEFGSSSYVRNTCVFGGAPKGGQMRDLQRGCEIVIATPGRLIDFLSAGSTNLKRCTYLVLDEADRMLDMGFEPQIRKIVSQIRPDRQTLMWSATWPKEVKQLAEDFLGNYIQINIGSLELSANHNIRQVVDVCDEFSKEEKLKTLLSDIYDTSESPGKIIIFVETKRRVDNLVRFIRSFGVRCGAIHGDKSQSERDFVLREFRSGKSNILVATDVAARGLDVDGIKYVINFDYPQNSEDYIHRIGRTGRSNTKGTSFAFFTKNNAKQAKALVDVLREANQEINPALENLARNSRYDGGGGRSRYGGGGGGGRFGGGGFKKGSLSNGRGFGGGGGGGGEGRHSRFD</sequence>